<name>MTNN_SALCH</name>
<protein>
    <recommendedName>
        <fullName evidence="1">5'-methylthioadenosine/S-adenosylhomocysteine nucleosidase</fullName>
        <shortName evidence="1">MTA/SAH nucleosidase</shortName>
        <shortName evidence="1">MTAN</shortName>
        <ecNumber evidence="1">3.2.2.9</ecNumber>
    </recommendedName>
    <alternativeName>
        <fullName evidence="1">5'-deoxyadenosine nucleosidase</fullName>
        <shortName evidence="1">DOA nucleosidase</shortName>
        <shortName evidence="1">dAdo nucleosidase</shortName>
    </alternativeName>
    <alternativeName>
        <fullName evidence="1">5'-methylthioadenosine nucleosidase</fullName>
        <shortName evidence="1">MTA nucleosidase</shortName>
    </alternativeName>
    <alternativeName>
        <fullName evidence="1">S-adenosylhomocysteine nucleosidase</fullName>
        <shortName evidence="1">AdoHcy nucleosidase</shortName>
        <shortName evidence="1">SAH nucleosidase</shortName>
        <shortName evidence="1">SRH nucleosidase</shortName>
    </alternativeName>
</protein>
<feature type="chain" id="PRO_0000359328" description="5'-methylthioadenosine/S-adenosylhomocysteine nucleosidase">
    <location>
        <begin position="1"/>
        <end position="232"/>
    </location>
</feature>
<feature type="active site" description="Proton acceptor" evidence="1">
    <location>
        <position position="12"/>
    </location>
</feature>
<feature type="active site" description="Proton donor" evidence="1">
    <location>
        <position position="197"/>
    </location>
</feature>
<feature type="binding site" evidence="1">
    <location>
        <position position="78"/>
    </location>
    <ligand>
        <name>substrate</name>
    </ligand>
</feature>
<feature type="binding site" evidence="1">
    <location>
        <position position="152"/>
    </location>
    <ligand>
        <name>substrate</name>
    </ligand>
</feature>
<feature type="binding site" evidence="1">
    <location>
        <begin position="173"/>
        <end position="174"/>
    </location>
    <ligand>
        <name>substrate</name>
    </ligand>
</feature>
<dbReference type="EC" id="3.2.2.9" evidence="1"/>
<dbReference type="EMBL" id="AE017220">
    <property type="protein sequence ID" value="AAX64113.1"/>
    <property type="molecule type" value="Genomic_DNA"/>
</dbReference>
<dbReference type="RefSeq" id="WP_000689826.1">
    <property type="nucleotide sequence ID" value="NC_006905.1"/>
</dbReference>
<dbReference type="SMR" id="Q57T48"/>
<dbReference type="KEGG" id="sec:SCH_0207"/>
<dbReference type="HOGENOM" id="CLU_031248_2_2_6"/>
<dbReference type="UniPathway" id="UPA00904">
    <property type="reaction ID" value="UER00871"/>
</dbReference>
<dbReference type="Proteomes" id="UP000000538">
    <property type="component" value="Chromosome"/>
</dbReference>
<dbReference type="GO" id="GO:0005829">
    <property type="term" value="C:cytosol"/>
    <property type="evidence" value="ECO:0007669"/>
    <property type="project" value="TreeGrafter"/>
</dbReference>
<dbReference type="GO" id="GO:0008782">
    <property type="term" value="F:adenosylhomocysteine nucleosidase activity"/>
    <property type="evidence" value="ECO:0007669"/>
    <property type="project" value="UniProtKB-UniRule"/>
</dbReference>
<dbReference type="GO" id="GO:0008930">
    <property type="term" value="F:methylthioadenosine nucleosidase activity"/>
    <property type="evidence" value="ECO:0007669"/>
    <property type="project" value="UniProtKB-UniRule"/>
</dbReference>
<dbReference type="GO" id="GO:0019509">
    <property type="term" value="P:L-methionine salvage from methylthioadenosine"/>
    <property type="evidence" value="ECO:0007669"/>
    <property type="project" value="UniProtKB-UniRule"/>
</dbReference>
<dbReference type="GO" id="GO:0019284">
    <property type="term" value="P:L-methionine salvage from S-adenosylmethionine"/>
    <property type="evidence" value="ECO:0007669"/>
    <property type="project" value="TreeGrafter"/>
</dbReference>
<dbReference type="GO" id="GO:0046124">
    <property type="term" value="P:purine deoxyribonucleoside catabolic process"/>
    <property type="evidence" value="ECO:0007669"/>
    <property type="project" value="UniProtKB-UniRule"/>
</dbReference>
<dbReference type="CDD" id="cd09008">
    <property type="entry name" value="MTAN"/>
    <property type="match status" value="1"/>
</dbReference>
<dbReference type="FunFam" id="3.40.50.1580:FF:000001">
    <property type="entry name" value="MTA/SAH nucleosidase family protein"/>
    <property type="match status" value="1"/>
</dbReference>
<dbReference type="Gene3D" id="3.40.50.1580">
    <property type="entry name" value="Nucleoside phosphorylase domain"/>
    <property type="match status" value="1"/>
</dbReference>
<dbReference type="HAMAP" id="MF_01684">
    <property type="entry name" value="Salvage_MtnN"/>
    <property type="match status" value="1"/>
</dbReference>
<dbReference type="InterPro" id="IPR010049">
    <property type="entry name" value="MTA_SAH_Nsdase"/>
</dbReference>
<dbReference type="InterPro" id="IPR000845">
    <property type="entry name" value="Nucleoside_phosphorylase_d"/>
</dbReference>
<dbReference type="InterPro" id="IPR035994">
    <property type="entry name" value="Nucleoside_phosphorylase_sf"/>
</dbReference>
<dbReference type="NCBIfam" id="TIGR01704">
    <property type="entry name" value="MTA_SAH-Nsdase"/>
    <property type="match status" value="1"/>
</dbReference>
<dbReference type="NCBIfam" id="NF004079">
    <property type="entry name" value="PRK05584.1"/>
    <property type="match status" value="1"/>
</dbReference>
<dbReference type="PANTHER" id="PTHR46832">
    <property type="entry name" value="5'-METHYLTHIOADENOSINE/S-ADENOSYLHOMOCYSTEINE NUCLEOSIDASE"/>
    <property type="match status" value="1"/>
</dbReference>
<dbReference type="PANTHER" id="PTHR46832:SF1">
    <property type="entry name" value="5'-METHYLTHIOADENOSINE_S-ADENOSYLHOMOCYSTEINE NUCLEOSIDASE"/>
    <property type="match status" value="1"/>
</dbReference>
<dbReference type="Pfam" id="PF01048">
    <property type="entry name" value="PNP_UDP_1"/>
    <property type="match status" value="1"/>
</dbReference>
<dbReference type="SUPFAM" id="SSF53167">
    <property type="entry name" value="Purine and uridine phosphorylases"/>
    <property type="match status" value="1"/>
</dbReference>
<evidence type="ECO:0000255" key="1">
    <source>
        <dbReference type="HAMAP-Rule" id="MF_01684"/>
    </source>
</evidence>
<keyword id="KW-0028">Amino-acid biosynthesis</keyword>
<keyword id="KW-0378">Hydrolase</keyword>
<keyword id="KW-0486">Methionine biosynthesis</keyword>
<accession>Q57T48</accession>
<proteinExistence type="inferred from homology"/>
<organism>
    <name type="scientific">Salmonella choleraesuis (strain SC-B67)</name>
    <dbReference type="NCBI Taxonomy" id="321314"/>
    <lineage>
        <taxon>Bacteria</taxon>
        <taxon>Pseudomonadati</taxon>
        <taxon>Pseudomonadota</taxon>
        <taxon>Gammaproteobacteria</taxon>
        <taxon>Enterobacterales</taxon>
        <taxon>Enterobacteriaceae</taxon>
        <taxon>Salmonella</taxon>
    </lineage>
</organism>
<sequence length="232" mass="24476">MKIGIIGAMEEEVTLLRDKIDNRQTITLGGCEIYTGQLNGTEVALLKSGIGKVAAALGATLLLEHCKPDVIINTGSAGGLASTLKVGDIVVSDETRYHDADVTAFGYEYGQLPGCPAGFKADDKLIAAAESCIRELNLNAVRGLIVSGDAFINGSVGLAKIRHNFPDAVAVEMEATAIAHVCHNFNVPFVVVRAISDVADQQSHLSFDEFLAVAAKQSTLMVETLVQKLAHG</sequence>
<gene>
    <name evidence="1" type="primary">mtnN</name>
    <name type="ordered locus">SCH_0207</name>
</gene>
<comment type="function">
    <text evidence="1">Catalyzes the irreversible cleavage of the glycosidic bond in both 5'-methylthioadenosine (MTA) and S-adenosylhomocysteine (SAH/AdoHcy) to adenine and the corresponding thioribose, 5'-methylthioribose and S-ribosylhomocysteine, respectively. Also cleaves 5'-deoxyadenosine, a toxic by-product of radical S-adenosylmethionine (SAM) enzymes, into 5-deoxyribose and adenine. Thus, is required for in vivo function of the radical SAM enzymes biotin synthase and lipoic acid synthase, that are inhibited by 5'-deoxyadenosine accumulation.</text>
</comment>
<comment type="catalytic activity">
    <reaction evidence="1">
        <text>S-adenosyl-L-homocysteine + H2O = S-(5-deoxy-D-ribos-5-yl)-L-homocysteine + adenine</text>
        <dbReference type="Rhea" id="RHEA:17805"/>
        <dbReference type="ChEBI" id="CHEBI:15377"/>
        <dbReference type="ChEBI" id="CHEBI:16708"/>
        <dbReference type="ChEBI" id="CHEBI:57856"/>
        <dbReference type="ChEBI" id="CHEBI:58195"/>
        <dbReference type="EC" id="3.2.2.9"/>
    </reaction>
</comment>
<comment type="catalytic activity">
    <reaction evidence="1">
        <text>S-methyl-5'-thioadenosine + H2O = 5-(methylsulfanyl)-D-ribose + adenine</text>
        <dbReference type="Rhea" id="RHEA:13617"/>
        <dbReference type="ChEBI" id="CHEBI:15377"/>
        <dbReference type="ChEBI" id="CHEBI:16708"/>
        <dbReference type="ChEBI" id="CHEBI:17509"/>
        <dbReference type="ChEBI" id="CHEBI:78440"/>
        <dbReference type="EC" id="3.2.2.9"/>
    </reaction>
</comment>
<comment type="catalytic activity">
    <reaction evidence="1">
        <text>5'-deoxyadenosine + H2O = 5-deoxy-D-ribose + adenine</text>
        <dbReference type="Rhea" id="RHEA:29859"/>
        <dbReference type="ChEBI" id="CHEBI:15377"/>
        <dbReference type="ChEBI" id="CHEBI:16708"/>
        <dbReference type="ChEBI" id="CHEBI:17319"/>
        <dbReference type="ChEBI" id="CHEBI:149540"/>
        <dbReference type="EC" id="3.2.2.9"/>
    </reaction>
    <physiologicalReaction direction="left-to-right" evidence="1">
        <dbReference type="Rhea" id="RHEA:29860"/>
    </physiologicalReaction>
</comment>
<comment type="pathway">
    <text evidence="1">Amino-acid biosynthesis; L-methionine biosynthesis via salvage pathway; S-methyl-5-thio-alpha-D-ribose 1-phosphate from S-methyl-5'-thioadenosine (hydrolase route): step 1/2.</text>
</comment>
<comment type="subunit">
    <text evidence="1">Homodimer.</text>
</comment>
<comment type="similarity">
    <text evidence="1">Belongs to the PNP/UDP phosphorylase family. MtnN subfamily.</text>
</comment>
<reference key="1">
    <citation type="journal article" date="2005" name="Nucleic Acids Res.">
        <title>The genome sequence of Salmonella enterica serovar Choleraesuis, a highly invasive and resistant zoonotic pathogen.</title>
        <authorList>
            <person name="Chiu C.-H."/>
            <person name="Tang P."/>
            <person name="Chu C."/>
            <person name="Hu S."/>
            <person name="Bao Q."/>
            <person name="Yu J."/>
            <person name="Chou Y.-Y."/>
            <person name="Wang H.-S."/>
            <person name="Lee Y.-S."/>
        </authorList>
    </citation>
    <scope>NUCLEOTIDE SEQUENCE [LARGE SCALE GENOMIC DNA]</scope>
    <source>
        <strain>SC-B67</strain>
    </source>
</reference>